<sequence>MKVRASVRKICEKCRVIKRRGRVMVICANPKHKQRQG</sequence>
<protein>
    <recommendedName>
        <fullName evidence="1">Large ribosomal subunit protein bL36</fullName>
    </recommendedName>
    <alternativeName>
        <fullName evidence="2">50S ribosomal protein L36</fullName>
    </alternativeName>
</protein>
<keyword id="KW-1185">Reference proteome</keyword>
<keyword id="KW-0687">Ribonucleoprotein</keyword>
<keyword id="KW-0689">Ribosomal protein</keyword>
<feature type="chain" id="PRO_0000302322" description="Large ribosomal subunit protein bL36">
    <location>
        <begin position="1"/>
        <end position="37"/>
    </location>
</feature>
<accession>Q31L27</accession>
<evidence type="ECO:0000255" key="1">
    <source>
        <dbReference type="HAMAP-Rule" id="MF_00251"/>
    </source>
</evidence>
<evidence type="ECO:0000305" key="2"/>
<proteinExistence type="inferred from homology"/>
<reference key="1">
    <citation type="submission" date="2005-08" db="EMBL/GenBank/DDBJ databases">
        <title>Complete sequence of chromosome 1 of Synechococcus elongatus PCC 7942.</title>
        <authorList>
            <consortium name="US DOE Joint Genome Institute"/>
            <person name="Copeland A."/>
            <person name="Lucas S."/>
            <person name="Lapidus A."/>
            <person name="Barry K."/>
            <person name="Detter J.C."/>
            <person name="Glavina T."/>
            <person name="Hammon N."/>
            <person name="Israni S."/>
            <person name="Pitluck S."/>
            <person name="Schmutz J."/>
            <person name="Larimer F."/>
            <person name="Land M."/>
            <person name="Kyrpides N."/>
            <person name="Lykidis A."/>
            <person name="Golden S."/>
            <person name="Richardson P."/>
        </authorList>
    </citation>
    <scope>NUCLEOTIDE SEQUENCE [LARGE SCALE GENOMIC DNA]</scope>
    <source>
        <strain>ATCC 33912 / PCC 7942 / FACHB-805</strain>
    </source>
</reference>
<name>RL36_SYNE7</name>
<dbReference type="EMBL" id="CP000100">
    <property type="protein sequence ID" value="ABB58242.1"/>
    <property type="molecule type" value="Genomic_DNA"/>
</dbReference>
<dbReference type="RefSeq" id="WP_011244195.1">
    <property type="nucleotide sequence ID" value="NZ_JACJTX010000001.1"/>
</dbReference>
<dbReference type="SMR" id="Q31L27"/>
<dbReference type="STRING" id="1140.Synpcc7942_2212"/>
<dbReference type="PaxDb" id="1140-Synpcc7942_2212"/>
<dbReference type="GeneID" id="72431095"/>
<dbReference type="KEGG" id="syf:Synpcc7942_2212"/>
<dbReference type="eggNOG" id="COG0257">
    <property type="taxonomic scope" value="Bacteria"/>
</dbReference>
<dbReference type="HOGENOM" id="CLU_135723_6_2_3"/>
<dbReference type="OrthoDB" id="9802520at2"/>
<dbReference type="BioCyc" id="SYNEL:SYNPCC7942_2212-MONOMER"/>
<dbReference type="Proteomes" id="UP000889800">
    <property type="component" value="Chromosome"/>
</dbReference>
<dbReference type="GO" id="GO:0005737">
    <property type="term" value="C:cytoplasm"/>
    <property type="evidence" value="ECO:0007669"/>
    <property type="project" value="UniProtKB-ARBA"/>
</dbReference>
<dbReference type="GO" id="GO:1990904">
    <property type="term" value="C:ribonucleoprotein complex"/>
    <property type="evidence" value="ECO:0007669"/>
    <property type="project" value="UniProtKB-KW"/>
</dbReference>
<dbReference type="GO" id="GO:0005840">
    <property type="term" value="C:ribosome"/>
    <property type="evidence" value="ECO:0007669"/>
    <property type="project" value="UniProtKB-KW"/>
</dbReference>
<dbReference type="GO" id="GO:0003735">
    <property type="term" value="F:structural constituent of ribosome"/>
    <property type="evidence" value="ECO:0007669"/>
    <property type="project" value="InterPro"/>
</dbReference>
<dbReference type="GO" id="GO:0006412">
    <property type="term" value="P:translation"/>
    <property type="evidence" value="ECO:0007669"/>
    <property type="project" value="UniProtKB-UniRule"/>
</dbReference>
<dbReference type="HAMAP" id="MF_00251">
    <property type="entry name" value="Ribosomal_bL36"/>
    <property type="match status" value="1"/>
</dbReference>
<dbReference type="InterPro" id="IPR000473">
    <property type="entry name" value="Ribosomal_bL36"/>
</dbReference>
<dbReference type="InterPro" id="IPR035977">
    <property type="entry name" value="Ribosomal_bL36_sp"/>
</dbReference>
<dbReference type="NCBIfam" id="TIGR01022">
    <property type="entry name" value="rpmJ_bact"/>
    <property type="match status" value="1"/>
</dbReference>
<dbReference type="PANTHER" id="PTHR42888">
    <property type="entry name" value="50S RIBOSOMAL PROTEIN L36, CHLOROPLASTIC"/>
    <property type="match status" value="1"/>
</dbReference>
<dbReference type="PANTHER" id="PTHR42888:SF1">
    <property type="entry name" value="LARGE RIBOSOMAL SUBUNIT PROTEIN BL36C"/>
    <property type="match status" value="1"/>
</dbReference>
<dbReference type="Pfam" id="PF00444">
    <property type="entry name" value="Ribosomal_L36"/>
    <property type="match status" value="1"/>
</dbReference>
<dbReference type="SUPFAM" id="SSF57840">
    <property type="entry name" value="Ribosomal protein L36"/>
    <property type="match status" value="1"/>
</dbReference>
<dbReference type="PROSITE" id="PS00828">
    <property type="entry name" value="RIBOSOMAL_L36"/>
    <property type="match status" value="1"/>
</dbReference>
<organism>
    <name type="scientific">Synechococcus elongatus (strain ATCC 33912 / PCC 7942 / FACHB-805)</name>
    <name type="common">Anacystis nidulans R2</name>
    <dbReference type="NCBI Taxonomy" id="1140"/>
    <lineage>
        <taxon>Bacteria</taxon>
        <taxon>Bacillati</taxon>
        <taxon>Cyanobacteriota</taxon>
        <taxon>Cyanophyceae</taxon>
        <taxon>Synechococcales</taxon>
        <taxon>Synechococcaceae</taxon>
        <taxon>Synechococcus</taxon>
    </lineage>
</organism>
<gene>
    <name evidence="1" type="primary">rpmJ</name>
    <name type="ordered locus">Synpcc7942_2212</name>
</gene>
<comment type="similarity">
    <text evidence="1">Belongs to the bacterial ribosomal protein bL36 family.</text>
</comment>